<sequence>MKRVKTYIPGLDEILYGGIPERHIVLVSGGPGTGKSILGKQFLYNGLTKGEGGVFIALEEHPVSVRRSFEHFKWDVRKYEREGKFAIIDTFTGGIGNVAQREKYVVKSIDDVKELSENIRAAIKDINATRIVVDSVSTLYLTKPAMARSIVMQLKRVISGLGCTAIFVSQVSVGERGFGGPGVEHAVDGIIRLDLDEVEGVMYRSIIIWKMRDTKISMVRHPMDITDNGIIVQWDKYLKISNWSVSIQPLPENEISQMKKAVEEAEKEVEVKVEGKEEEE</sequence>
<gene>
    <name type="ordered locus">SSO1861</name>
</gene>
<evidence type="ECO:0000255" key="1">
    <source>
        <dbReference type="HAMAP-Rule" id="MF_01076"/>
    </source>
</evidence>
<dbReference type="EMBL" id="AE006641">
    <property type="protein sequence ID" value="AAK42049.1"/>
    <property type="molecule type" value="Genomic_DNA"/>
</dbReference>
<dbReference type="PIR" id="B90349">
    <property type="entry name" value="B90349"/>
</dbReference>
<dbReference type="RefSeq" id="WP_009988518.1">
    <property type="nucleotide sequence ID" value="NC_002754.1"/>
</dbReference>
<dbReference type="SMR" id="Q97X93"/>
<dbReference type="STRING" id="273057.SSO1861"/>
<dbReference type="PaxDb" id="273057-SSO1861"/>
<dbReference type="EnsemblBacteria" id="AAK42049">
    <property type="protein sequence ID" value="AAK42049"/>
    <property type="gene ID" value="SSO1861"/>
</dbReference>
<dbReference type="KEGG" id="sso:SSO1861"/>
<dbReference type="PATRIC" id="fig|273057.12.peg.1911"/>
<dbReference type="eggNOG" id="arCOG01171">
    <property type="taxonomic scope" value="Archaea"/>
</dbReference>
<dbReference type="HOGENOM" id="CLU_023669_2_0_2"/>
<dbReference type="InParanoid" id="Q97X93"/>
<dbReference type="PhylomeDB" id="Q97X93"/>
<dbReference type="BRENDA" id="3.6.4.B4">
    <property type="organism ID" value="6163"/>
</dbReference>
<dbReference type="Proteomes" id="UP000001974">
    <property type="component" value="Chromosome"/>
</dbReference>
<dbReference type="GO" id="GO:0005524">
    <property type="term" value="F:ATP binding"/>
    <property type="evidence" value="ECO:0007669"/>
    <property type="project" value="UniProtKB-UniRule"/>
</dbReference>
<dbReference type="CDD" id="cd19486">
    <property type="entry name" value="KaiC_arch"/>
    <property type="match status" value="1"/>
</dbReference>
<dbReference type="Gene3D" id="3.40.50.300">
    <property type="entry name" value="P-loop containing nucleotide triphosphate hydrolases"/>
    <property type="match status" value="1"/>
</dbReference>
<dbReference type="HAMAP" id="MF_01076">
    <property type="entry name" value="UPF0273"/>
    <property type="match status" value="1"/>
</dbReference>
<dbReference type="InterPro" id="IPR014774">
    <property type="entry name" value="KaiC-like_dom"/>
</dbReference>
<dbReference type="InterPro" id="IPR010624">
    <property type="entry name" value="KaiC_dom"/>
</dbReference>
<dbReference type="InterPro" id="IPR027417">
    <property type="entry name" value="P-loop_NTPase"/>
</dbReference>
<dbReference type="InterPro" id="IPR022475">
    <property type="entry name" value="UPF0273_KaiC-like"/>
</dbReference>
<dbReference type="NCBIfam" id="TIGR03877">
    <property type="entry name" value="thermo_KaiC_1"/>
    <property type="match status" value="1"/>
</dbReference>
<dbReference type="PANTHER" id="PTHR43637">
    <property type="entry name" value="UPF0273 PROTEIN TM_0370"/>
    <property type="match status" value="1"/>
</dbReference>
<dbReference type="PANTHER" id="PTHR43637:SF1">
    <property type="entry name" value="UPF0273 PROTEIN TM_0370"/>
    <property type="match status" value="1"/>
</dbReference>
<dbReference type="Pfam" id="PF06745">
    <property type="entry name" value="ATPase"/>
    <property type="match status" value="1"/>
</dbReference>
<dbReference type="PRINTS" id="PR01874">
    <property type="entry name" value="DNAREPAIRADA"/>
</dbReference>
<dbReference type="SUPFAM" id="SSF52540">
    <property type="entry name" value="P-loop containing nucleoside triphosphate hydrolases"/>
    <property type="match status" value="1"/>
</dbReference>
<dbReference type="PROSITE" id="PS51146">
    <property type="entry name" value="KAIC"/>
    <property type="match status" value="1"/>
</dbReference>
<accession>Q97X93</accession>
<keyword id="KW-0067">ATP-binding</keyword>
<keyword id="KW-0547">Nucleotide-binding</keyword>
<keyword id="KW-1185">Reference proteome</keyword>
<comment type="similarity">
    <text evidence="1">Belongs to the UPF0273 family.</text>
</comment>
<organism>
    <name type="scientific">Saccharolobus solfataricus (strain ATCC 35092 / DSM 1617 / JCM 11322 / P2)</name>
    <name type="common">Sulfolobus solfataricus</name>
    <dbReference type="NCBI Taxonomy" id="273057"/>
    <lineage>
        <taxon>Archaea</taxon>
        <taxon>Thermoproteota</taxon>
        <taxon>Thermoprotei</taxon>
        <taxon>Sulfolobales</taxon>
        <taxon>Sulfolobaceae</taxon>
        <taxon>Saccharolobus</taxon>
    </lineage>
</organism>
<name>Y1861_SACS2</name>
<protein>
    <recommendedName>
        <fullName evidence="1">UPF0273 protein SSO1861</fullName>
    </recommendedName>
</protein>
<proteinExistence type="inferred from homology"/>
<reference key="1">
    <citation type="journal article" date="2001" name="Proc. Natl. Acad. Sci. U.S.A.">
        <title>The complete genome of the crenarchaeon Sulfolobus solfataricus P2.</title>
        <authorList>
            <person name="She Q."/>
            <person name="Singh R.K."/>
            <person name="Confalonieri F."/>
            <person name="Zivanovic Y."/>
            <person name="Allard G."/>
            <person name="Awayez M.J."/>
            <person name="Chan-Weiher C.C.-Y."/>
            <person name="Clausen I.G."/>
            <person name="Curtis B.A."/>
            <person name="De Moors A."/>
            <person name="Erauso G."/>
            <person name="Fletcher C."/>
            <person name="Gordon P.M.K."/>
            <person name="Heikamp-de Jong I."/>
            <person name="Jeffries A.C."/>
            <person name="Kozera C.J."/>
            <person name="Medina N."/>
            <person name="Peng X."/>
            <person name="Thi-Ngoc H.P."/>
            <person name="Redder P."/>
            <person name="Schenk M.E."/>
            <person name="Theriault C."/>
            <person name="Tolstrup N."/>
            <person name="Charlebois R.L."/>
            <person name="Doolittle W.F."/>
            <person name="Duguet M."/>
            <person name="Gaasterland T."/>
            <person name="Garrett R.A."/>
            <person name="Ragan M.A."/>
            <person name="Sensen C.W."/>
            <person name="Van der Oost J."/>
        </authorList>
    </citation>
    <scope>NUCLEOTIDE SEQUENCE [LARGE SCALE GENOMIC DNA]</scope>
    <source>
        <strain>ATCC 35092 / DSM 1617 / JCM 11322 / P2</strain>
    </source>
</reference>
<feature type="chain" id="PRO_0000184592" description="UPF0273 protein SSO1861">
    <location>
        <begin position="1"/>
        <end position="280"/>
    </location>
</feature>
<feature type="domain" description="KaiC" evidence="1">
    <location>
        <begin position="2"/>
        <end position="246"/>
    </location>
</feature>
<feature type="binding site" evidence="1">
    <location>
        <begin position="29"/>
        <end position="36"/>
    </location>
    <ligand>
        <name>ATP</name>
        <dbReference type="ChEBI" id="CHEBI:30616"/>
    </ligand>
</feature>